<keyword id="KW-0150">Chloroplast</keyword>
<keyword id="KW-0903">Direct protein sequencing</keyword>
<keyword id="KW-0413">Isomerase</keyword>
<keyword id="KW-0460">Magnesium</keyword>
<keyword id="KW-0611">Plant defense</keyword>
<keyword id="KW-0934">Plastid</keyword>
<keyword id="KW-0809">Transit peptide</keyword>
<reference key="1">
    <citation type="journal article" date="1999" name="Plant Physiol.">
        <title>Purification and cDNA cloning of isochorismate synthase from elicited cell cultures of Catharanthus roseus.</title>
        <authorList>
            <person name="van Tegelen L.J.P."/>
            <person name="Moreno P.R.H."/>
            <person name="Croes A.F."/>
            <person name="Verpoorte R."/>
            <person name="Wullems G.J."/>
        </authorList>
    </citation>
    <scope>NUCLEOTIDE SEQUENCE [MRNA]</scope>
    <scope>PROTEIN SEQUENCE OF 108-126; 191-204; 221-232; 309-317 AND 509-530</scope>
    <scope>FUNCTION</scope>
    <scope>CATALYTIC ACTIVITY</scope>
    <scope>COFACTOR</scope>
    <scope>BIOPHYSICOCHEMICAL PROPERTIES</scope>
    <scope>ACTIVITY REGULATION</scope>
    <source>
        <strain>cv. G. Don</strain>
    </source>
</reference>
<reference key="2">
    <citation type="journal article" date="1994" name="Plant Cell Rep.">
        <title>Elicitor-mediated induction of isochorismate synthase and accumulation of 2,3-dihydroxy benzoic acid in Catharanthus roseus cell suspension and shoot cultures.</title>
        <authorList>
            <person name="Moreno P.R."/>
            <person name="van der Heijden R."/>
            <person name="Verpoorte R."/>
        </authorList>
    </citation>
    <scope>FUNCTION</scope>
    <scope>INDUCTION BY ELICITOR</scope>
</reference>
<reference key="3">
    <citation type="journal article" date="2009" name="Phytochemistry">
        <title>Biosynthesis of salicylic acid in fungus elicited Catharanthus roseus cells.</title>
        <authorList>
            <person name="Mustafa N.R."/>
            <person name="Kim H.K."/>
            <person name="Choi Y.H."/>
            <person name="Erkelens C."/>
            <person name="Lefeber A.W."/>
            <person name="Spijksma G."/>
            <person name="van der Heijden R."/>
            <person name="Verpoorte R."/>
        </authorList>
    </citation>
    <scope>FUNCTION</scope>
</reference>
<organism>
    <name type="scientific">Catharanthus roseus</name>
    <name type="common">Madagascar periwinkle</name>
    <name type="synonym">Vinca rosea</name>
    <dbReference type="NCBI Taxonomy" id="4058"/>
    <lineage>
        <taxon>Eukaryota</taxon>
        <taxon>Viridiplantae</taxon>
        <taxon>Streptophyta</taxon>
        <taxon>Embryophyta</taxon>
        <taxon>Tracheophyta</taxon>
        <taxon>Spermatophyta</taxon>
        <taxon>Magnoliopsida</taxon>
        <taxon>eudicotyledons</taxon>
        <taxon>Gunneridae</taxon>
        <taxon>Pentapetalae</taxon>
        <taxon>asterids</taxon>
        <taxon>lamiids</taxon>
        <taxon>Gentianales</taxon>
        <taxon>Apocynaceae</taxon>
        <taxon>Rauvolfioideae</taxon>
        <taxon>Vinceae</taxon>
        <taxon>Catharanthinae</taxon>
        <taxon>Catharanthus</taxon>
    </lineage>
</organism>
<name>ICS_CATRO</name>
<accession>Q9ZPC0</accession>
<evidence type="ECO:0000255" key="1"/>
<evidence type="ECO:0000269" key="2">
    <source>
    </source>
</evidence>
<evidence type="ECO:0000269" key="3">
    <source>
    </source>
</evidence>
<evidence type="ECO:0000269" key="4">
    <source>
    </source>
</evidence>
<evidence type="ECO:0000305" key="5"/>
<evidence type="ECO:0000305" key="6">
    <source>
    </source>
</evidence>
<comment type="function">
    <text evidence="2 3 4">Involved in the synthesis of o-succinylbenzoic acid, 2,3-dihydroxybenzoic acid and salicylic acid (SA).</text>
</comment>
<comment type="catalytic activity">
    <reaction evidence="4">
        <text>chorismate = isochorismate</text>
        <dbReference type="Rhea" id="RHEA:18985"/>
        <dbReference type="ChEBI" id="CHEBI:29748"/>
        <dbReference type="ChEBI" id="CHEBI:29780"/>
        <dbReference type="EC" id="5.4.4.2"/>
    </reaction>
</comment>
<comment type="cofactor">
    <cofactor evidence="4">
        <name>Mg(2+)</name>
        <dbReference type="ChEBI" id="CHEBI:18420"/>
    </cofactor>
</comment>
<comment type="activity regulation">
    <text evidence="4">Not inhibited by Tyr, Phe or Trp.</text>
</comment>
<comment type="biophysicochemical properties">
    <kinetics>
        <KM evidence="4">319 uM for chorismate</KM>
        <KM evidence="4">1.63 mM for Mg(2+) (in the presence of 2 mM chorismate)</KM>
    </kinetics>
    <phDependence>
        <text evidence="4">Optimum pH is 7.0-9.0.</text>
    </phDependence>
</comment>
<comment type="subcellular location">
    <subcellularLocation>
        <location evidence="5">Plastid</location>
        <location evidence="5">Chloroplast</location>
    </subcellularLocation>
</comment>
<comment type="induction">
    <text evidence="3">Up-regulated by fungal elicitor.</text>
</comment>
<comment type="miscellaneous">
    <text evidence="6">Two isoforms can be purified from cell cultures, but they are probably encoded by a single gene and may arise by post-transcriptional modifications.</text>
</comment>
<comment type="similarity">
    <text evidence="5">Belongs to the isochorismate synthase family.</text>
</comment>
<sequence length="580" mass="64073">MASITGHCVAHFTDLSTRKSSFFSNSNNNSSLFRRKSTNIVTRKKYIFCSTSLSMNGCNGDPRAPVGTIETRTLPAVSTPALAMERLSSAVANLKSTLPSAQSGIIRLEVPIEEHIEALDWLHSQDQKNLLPRCYFSGRSQVTFSDFTSNDLTNRNGSAANGHLQRISTSSDDKNLVSVAGVGSAVLFRSPNPFSFDDWLSIKRFLSKNCPLIRAYGAIRFDARPHIAPEWKAFGSFYFVVPQVEFDELHGSSMIAATVAWDNALSLTYQQAIVALQTTMEQVSSTVSKLRQDVSHTSLVSKANIPDRTSWDLTLNRVLEEIGNKYSPLTKVVLARRSQVITTSDIDPLAWLSSFKADGKDAYQFCLQPHEAPAFIGNTPEQLFGRDQLTVFSEALAATRARGESDSLDLQMAHDLFSSPKDNHEFAIVRENIRQKLDAICTSVETEPMKSVRKLKRIQHLYARFAGRLRSEDDEFKILSSLHPTPAVCGFPMEDARKFIAENEMFDRGLYAGPVGFFGGAQSDFSVGIRSALIGKDAGALIYAGLGVVEGSDPALEWQELELKASQFMKLMKLEAPALK</sequence>
<dbReference type="EC" id="5.4.4.2"/>
<dbReference type="EMBL" id="AJ006065">
    <property type="protein sequence ID" value="CAA06837.1"/>
    <property type="molecule type" value="mRNA"/>
</dbReference>
<dbReference type="SMR" id="Q9ZPC0"/>
<dbReference type="KEGG" id="ag:CAA06837"/>
<dbReference type="SABIO-RK" id="Q9ZPC0"/>
<dbReference type="GO" id="GO:0009507">
    <property type="term" value="C:chloroplast"/>
    <property type="evidence" value="ECO:0007669"/>
    <property type="project" value="UniProtKB-SubCell"/>
</dbReference>
<dbReference type="GO" id="GO:0008909">
    <property type="term" value="F:isochorismate synthase activity"/>
    <property type="evidence" value="ECO:0007669"/>
    <property type="project" value="UniProtKB-EC"/>
</dbReference>
<dbReference type="GO" id="GO:0006952">
    <property type="term" value="P:defense response"/>
    <property type="evidence" value="ECO:0007669"/>
    <property type="project" value="UniProtKB-KW"/>
</dbReference>
<dbReference type="GO" id="GO:0042372">
    <property type="term" value="P:phylloquinone biosynthetic process"/>
    <property type="evidence" value="ECO:0007669"/>
    <property type="project" value="TreeGrafter"/>
</dbReference>
<dbReference type="FunFam" id="3.60.120.10:FF:000005">
    <property type="entry name" value="isochorismate synthase, chloroplastic-like isoform X1"/>
    <property type="match status" value="1"/>
</dbReference>
<dbReference type="Gene3D" id="3.60.120.10">
    <property type="entry name" value="Anthranilate synthase"/>
    <property type="match status" value="1"/>
</dbReference>
<dbReference type="InterPro" id="IPR005801">
    <property type="entry name" value="ADC_synthase"/>
</dbReference>
<dbReference type="InterPro" id="IPR015890">
    <property type="entry name" value="Chorismate_C"/>
</dbReference>
<dbReference type="InterPro" id="IPR004561">
    <property type="entry name" value="IsoChor_synthase"/>
</dbReference>
<dbReference type="InterPro" id="IPR044250">
    <property type="entry name" value="MenF-like"/>
</dbReference>
<dbReference type="NCBIfam" id="TIGR00543">
    <property type="entry name" value="isochor_syn"/>
    <property type="match status" value="1"/>
</dbReference>
<dbReference type="PANTHER" id="PTHR47253">
    <property type="match status" value="1"/>
</dbReference>
<dbReference type="PANTHER" id="PTHR47253:SF4">
    <property type="entry name" value="ISOCHORISMATE SYNTHASE 2, CHLOROPLASTIC"/>
    <property type="match status" value="1"/>
</dbReference>
<dbReference type="Pfam" id="PF00425">
    <property type="entry name" value="Chorismate_bind"/>
    <property type="match status" value="1"/>
</dbReference>
<dbReference type="SUPFAM" id="SSF56322">
    <property type="entry name" value="ADC synthase"/>
    <property type="match status" value="1"/>
</dbReference>
<proteinExistence type="evidence at protein level"/>
<protein>
    <recommendedName>
        <fullName>Isochorismate synthase, chloroplastic</fullName>
        <ecNumber>5.4.4.2</ecNumber>
    </recommendedName>
</protein>
<feature type="transit peptide" description="Chloroplast" evidence="1">
    <location>
        <begin position="1"/>
        <end position="91"/>
    </location>
</feature>
<feature type="chain" id="PRO_0000035792" description="Isochorismate synthase, chloroplastic">
    <location>
        <begin position="92"/>
        <end position="580"/>
    </location>
</feature>